<reference key="1">
    <citation type="journal article" date="1998" name="Zool. Sci.">
        <title>Two molecular forms of insulin from barfin flounder, Verasper moseri, are derived from a single gene.</title>
        <authorList>
            <person name="Andoh T."/>
            <person name="Nagasawa H."/>
        </authorList>
    </citation>
    <scope>NUCLEOTIDE SEQUENCE [GENOMIC DNA]</scope>
</reference>
<feature type="signal peptide" evidence="1">
    <location>
        <begin position="1"/>
        <end position="22"/>
    </location>
</feature>
<feature type="peptide" id="PRO_0000015926" description="Insulin B chain">
    <location>
        <begin position="23"/>
        <end position="53"/>
    </location>
</feature>
<feature type="propeptide" id="PRO_0000015927" description="C peptide">
    <location>
        <begin position="56"/>
        <end position="92"/>
    </location>
</feature>
<feature type="peptide" id="PRO_0000015928" description="Insulin A chain">
    <location>
        <begin position="95"/>
        <end position="115"/>
    </location>
</feature>
<feature type="disulfide bond" description="Interchain (between B and A chains)" evidence="1">
    <location>
        <begin position="32"/>
        <end position="101"/>
    </location>
</feature>
<feature type="disulfide bond" description="Interchain (between B and A chains)" evidence="1">
    <location>
        <begin position="44"/>
        <end position="114"/>
    </location>
</feature>
<feature type="disulfide bond" evidence="1">
    <location>
        <begin position="100"/>
        <end position="105"/>
    </location>
</feature>
<dbReference type="EMBL" id="AB029318">
    <property type="protein sequence ID" value="BAA82315.1"/>
    <property type="molecule type" value="Genomic_DNA"/>
</dbReference>
<dbReference type="SMR" id="Q9W7R2"/>
<dbReference type="GO" id="GO:0005615">
    <property type="term" value="C:extracellular space"/>
    <property type="evidence" value="ECO:0007669"/>
    <property type="project" value="TreeGrafter"/>
</dbReference>
<dbReference type="GO" id="GO:0005179">
    <property type="term" value="F:hormone activity"/>
    <property type="evidence" value="ECO:0007669"/>
    <property type="project" value="UniProtKB-KW"/>
</dbReference>
<dbReference type="GO" id="GO:0006006">
    <property type="term" value="P:glucose metabolic process"/>
    <property type="evidence" value="ECO:0007669"/>
    <property type="project" value="UniProtKB-KW"/>
</dbReference>
<dbReference type="CDD" id="cd04367">
    <property type="entry name" value="IlGF_insulin_like"/>
    <property type="match status" value="1"/>
</dbReference>
<dbReference type="FunFam" id="1.10.100.10:FF:000003">
    <property type="entry name" value="Insulin"/>
    <property type="match status" value="1"/>
</dbReference>
<dbReference type="Gene3D" id="1.10.100.10">
    <property type="entry name" value="Insulin-like"/>
    <property type="match status" value="1"/>
</dbReference>
<dbReference type="InterPro" id="IPR004825">
    <property type="entry name" value="Insulin"/>
</dbReference>
<dbReference type="InterPro" id="IPR016179">
    <property type="entry name" value="Insulin-like"/>
</dbReference>
<dbReference type="InterPro" id="IPR036438">
    <property type="entry name" value="Insulin-like_sf"/>
</dbReference>
<dbReference type="InterPro" id="IPR022353">
    <property type="entry name" value="Insulin_CS"/>
</dbReference>
<dbReference type="InterPro" id="IPR022352">
    <property type="entry name" value="Insulin_family"/>
</dbReference>
<dbReference type="PANTHER" id="PTHR11454:SF9">
    <property type="entry name" value="INSULIN"/>
    <property type="match status" value="1"/>
</dbReference>
<dbReference type="PANTHER" id="PTHR11454">
    <property type="entry name" value="INSULIN/INSULIN GROWTH FACTOR"/>
    <property type="match status" value="1"/>
</dbReference>
<dbReference type="Pfam" id="PF00049">
    <property type="entry name" value="Insulin"/>
    <property type="match status" value="1"/>
</dbReference>
<dbReference type="PRINTS" id="PR00277">
    <property type="entry name" value="INSULIN"/>
</dbReference>
<dbReference type="PRINTS" id="PR00276">
    <property type="entry name" value="INSULINFAMLY"/>
</dbReference>
<dbReference type="SMART" id="SM00078">
    <property type="entry name" value="IlGF"/>
    <property type="match status" value="1"/>
</dbReference>
<dbReference type="SUPFAM" id="SSF56994">
    <property type="entry name" value="Insulin-like"/>
    <property type="match status" value="1"/>
</dbReference>
<dbReference type="PROSITE" id="PS00262">
    <property type="entry name" value="INSULIN"/>
    <property type="match status" value="1"/>
</dbReference>
<proteinExistence type="inferred from homology"/>
<name>INS_VERMO</name>
<gene>
    <name type="primary">ins</name>
</gene>
<organism>
    <name type="scientific">Verasper moseri</name>
    <name type="common">Barfin flounder</name>
    <dbReference type="NCBI Taxonomy" id="98923"/>
    <lineage>
        <taxon>Eukaryota</taxon>
        <taxon>Metazoa</taxon>
        <taxon>Chordata</taxon>
        <taxon>Craniata</taxon>
        <taxon>Vertebrata</taxon>
        <taxon>Euteleostomi</taxon>
        <taxon>Actinopterygii</taxon>
        <taxon>Neopterygii</taxon>
        <taxon>Teleostei</taxon>
        <taxon>Neoteleostei</taxon>
        <taxon>Acanthomorphata</taxon>
        <taxon>Carangaria</taxon>
        <taxon>Pleuronectiformes</taxon>
        <taxon>Pleuronectoidei</taxon>
        <taxon>Pleuronectidae</taxon>
        <taxon>Verasper</taxon>
    </lineage>
</organism>
<sequence>MAALWLQSVSLLVLMLVSWSGSQAVLPPQHLCGAHLVDALYLVCGERGFFYTPKRDVDPLLGFLPAKSGGAAAGGENEVAEFAFKDQMEMMVKRGIVEQCCHKPCNIFDLQNYCN</sequence>
<evidence type="ECO:0000250" key="1"/>
<evidence type="ECO:0000305" key="2"/>
<accession>Q9W7R2</accession>
<comment type="function">
    <text>Insulin decreases blood glucose concentration. It increases cell permeability to monosaccharides, amino acids and fatty acids. It accelerates glycolysis, the pentose phosphate cycle, and glycogen synthesis in liver.</text>
</comment>
<comment type="subunit">
    <text>Heterodimer of a B chain and an A chain linked by two disulfide bonds.</text>
</comment>
<comment type="subcellular location">
    <subcellularLocation>
        <location>Secreted</location>
    </subcellularLocation>
</comment>
<comment type="similarity">
    <text evidence="2">Belongs to the insulin family.</text>
</comment>
<keyword id="KW-0119">Carbohydrate metabolism</keyword>
<keyword id="KW-0165">Cleavage on pair of basic residues</keyword>
<keyword id="KW-1015">Disulfide bond</keyword>
<keyword id="KW-0313">Glucose metabolism</keyword>
<keyword id="KW-0372">Hormone</keyword>
<keyword id="KW-0964">Secreted</keyword>
<keyword id="KW-0732">Signal</keyword>
<protein>
    <recommendedName>
        <fullName>Insulin</fullName>
    </recommendedName>
    <component>
        <recommendedName>
            <fullName>Insulin B chain</fullName>
        </recommendedName>
    </component>
    <component>
        <recommendedName>
            <fullName>Insulin A chain</fullName>
        </recommendedName>
    </component>
</protein>